<evidence type="ECO:0000255" key="1">
    <source>
        <dbReference type="HAMAP-Rule" id="MF_00139"/>
    </source>
</evidence>
<evidence type="ECO:0000255" key="2">
    <source>
        <dbReference type="PROSITE-ProRule" id="PRU01202"/>
    </source>
</evidence>
<accession>A4XKZ2</accession>
<comment type="catalytic activity">
    <reaction evidence="1">
        <text>(6R)-10-formyltetrahydrofolate + 5-amino-1-(5-phospho-beta-D-ribosyl)imidazole-4-carboxamide = 5-formamido-1-(5-phospho-D-ribosyl)imidazole-4-carboxamide + (6S)-5,6,7,8-tetrahydrofolate</text>
        <dbReference type="Rhea" id="RHEA:22192"/>
        <dbReference type="ChEBI" id="CHEBI:57453"/>
        <dbReference type="ChEBI" id="CHEBI:58467"/>
        <dbReference type="ChEBI" id="CHEBI:58475"/>
        <dbReference type="ChEBI" id="CHEBI:195366"/>
        <dbReference type="EC" id="2.1.2.3"/>
    </reaction>
</comment>
<comment type="catalytic activity">
    <reaction evidence="1">
        <text>IMP + H2O = 5-formamido-1-(5-phospho-D-ribosyl)imidazole-4-carboxamide</text>
        <dbReference type="Rhea" id="RHEA:18445"/>
        <dbReference type="ChEBI" id="CHEBI:15377"/>
        <dbReference type="ChEBI" id="CHEBI:58053"/>
        <dbReference type="ChEBI" id="CHEBI:58467"/>
        <dbReference type="EC" id="3.5.4.10"/>
    </reaction>
</comment>
<comment type="pathway">
    <text evidence="1">Purine metabolism; IMP biosynthesis via de novo pathway; 5-formamido-1-(5-phospho-D-ribosyl)imidazole-4-carboxamide from 5-amino-1-(5-phospho-D-ribosyl)imidazole-4-carboxamide (10-formyl THF route): step 1/1.</text>
</comment>
<comment type="pathway">
    <text evidence="1">Purine metabolism; IMP biosynthesis via de novo pathway; IMP from 5-formamido-1-(5-phospho-D-ribosyl)imidazole-4-carboxamide: step 1/1.</text>
</comment>
<comment type="domain">
    <text evidence="1">The IMP cyclohydrolase activity resides in the N-terminal region.</text>
</comment>
<comment type="similarity">
    <text evidence="1">Belongs to the PurH family.</text>
</comment>
<keyword id="KW-0378">Hydrolase</keyword>
<keyword id="KW-0511">Multifunctional enzyme</keyword>
<keyword id="KW-0658">Purine biosynthesis</keyword>
<keyword id="KW-0808">Transferase</keyword>
<proteinExistence type="inferred from homology"/>
<reference key="1">
    <citation type="submission" date="2007-04" db="EMBL/GenBank/DDBJ databases">
        <title>Genome sequence of the thermophilic hydrogen-producing bacterium Caldicellulosiruptor saccharolyticus DSM 8903.</title>
        <authorList>
            <person name="Copeland A."/>
            <person name="Lucas S."/>
            <person name="Lapidus A."/>
            <person name="Barry K."/>
            <person name="Detter J.C."/>
            <person name="Glavina del Rio T."/>
            <person name="Hammon N."/>
            <person name="Israni S."/>
            <person name="Dalin E."/>
            <person name="Tice H."/>
            <person name="Pitluck S."/>
            <person name="Kiss H."/>
            <person name="Brettin T."/>
            <person name="Bruce D."/>
            <person name="Han C."/>
            <person name="Schmutz J."/>
            <person name="Larimer F."/>
            <person name="Land M."/>
            <person name="Hauser L."/>
            <person name="Kyrpides N."/>
            <person name="Lykidis A."/>
            <person name="van de Werken H.J.G."/>
            <person name="Verhaart M.R.A."/>
            <person name="VanFossen A.L."/>
            <person name="Lewis D.L."/>
            <person name="Nichols J.D."/>
            <person name="Goorissen H.P."/>
            <person name="van Niel E.W.J."/>
            <person name="Stams F.J.M."/>
            <person name="Willquist K.U."/>
            <person name="Ward D.E."/>
            <person name="van der Oost J."/>
            <person name="Kelly R.M."/>
            <person name="Kengen S.M.W."/>
            <person name="Richardson P."/>
        </authorList>
    </citation>
    <scope>NUCLEOTIDE SEQUENCE [LARGE SCALE GENOMIC DNA]</scope>
    <source>
        <strain>ATCC 43494 / DSM 8903 / Tp8T 6331</strain>
    </source>
</reference>
<protein>
    <recommendedName>
        <fullName evidence="1">Bifunctional purine biosynthesis protein PurH</fullName>
    </recommendedName>
    <domain>
        <recommendedName>
            <fullName evidence="1">Phosphoribosylaminoimidazolecarboxamide formyltransferase</fullName>
            <ecNumber evidence="1">2.1.2.3</ecNumber>
        </recommendedName>
        <alternativeName>
            <fullName evidence="1">AICAR transformylase</fullName>
        </alternativeName>
    </domain>
    <domain>
        <recommendedName>
            <fullName evidence="1">IMP cyclohydrolase</fullName>
            <ecNumber evidence="1">3.5.4.10</ecNumber>
        </recommendedName>
        <alternativeName>
            <fullName evidence="1">ATIC</fullName>
        </alternativeName>
        <alternativeName>
            <fullName evidence="1">IMP synthase</fullName>
        </alternativeName>
        <alternativeName>
            <fullName evidence="1">Inosinicase</fullName>
        </alternativeName>
    </domain>
</protein>
<feature type="chain" id="PRO_1000018866" description="Bifunctional purine biosynthesis protein PurH">
    <location>
        <begin position="1"/>
        <end position="513"/>
    </location>
</feature>
<feature type="domain" description="MGS-like" evidence="2">
    <location>
        <begin position="1"/>
        <end position="145"/>
    </location>
</feature>
<organism>
    <name type="scientific">Caldicellulosiruptor saccharolyticus (strain ATCC 43494 / DSM 8903 / Tp8T 6331)</name>
    <dbReference type="NCBI Taxonomy" id="351627"/>
    <lineage>
        <taxon>Bacteria</taxon>
        <taxon>Bacillati</taxon>
        <taxon>Bacillota</taxon>
        <taxon>Bacillota incertae sedis</taxon>
        <taxon>Caldicellulosiruptorales</taxon>
        <taxon>Caldicellulosiruptoraceae</taxon>
        <taxon>Caldicellulosiruptor</taxon>
    </lineage>
</organism>
<name>PUR9_CALS8</name>
<dbReference type="EC" id="2.1.2.3" evidence="1"/>
<dbReference type="EC" id="3.5.4.10" evidence="1"/>
<dbReference type="EMBL" id="CP000679">
    <property type="protein sequence ID" value="ABP67577.1"/>
    <property type="molecule type" value="Genomic_DNA"/>
</dbReference>
<dbReference type="RefSeq" id="WP_011917512.1">
    <property type="nucleotide sequence ID" value="NC_009437.1"/>
</dbReference>
<dbReference type="SMR" id="A4XKZ2"/>
<dbReference type="STRING" id="351627.Csac_1992"/>
<dbReference type="KEGG" id="csc:Csac_1992"/>
<dbReference type="eggNOG" id="COG0138">
    <property type="taxonomic scope" value="Bacteria"/>
</dbReference>
<dbReference type="HOGENOM" id="CLU_016316_5_2_9"/>
<dbReference type="OrthoDB" id="9802065at2"/>
<dbReference type="UniPathway" id="UPA00074">
    <property type="reaction ID" value="UER00133"/>
</dbReference>
<dbReference type="UniPathway" id="UPA00074">
    <property type="reaction ID" value="UER00135"/>
</dbReference>
<dbReference type="Proteomes" id="UP000000256">
    <property type="component" value="Chromosome"/>
</dbReference>
<dbReference type="GO" id="GO:0005829">
    <property type="term" value="C:cytosol"/>
    <property type="evidence" value="ECO:0007669"/>
    <property type="project" value="TreeGrafter"/>
</dbReference>
<dbReference type="GO" id="GO:0003937">
    <property type="term" value="F:IMP cyclohydrolase activity"/>
    <property type="evidence" value="ECO:0007669"/>
    <property type="project" value="UniProtKB-UniRule"/>
</dbReference>
<dbReference type="GO" id="GO:0004643">
    <property type="term" value="F:phosphoribosylaminoimidazolecarboxamide formyltransferase activity"/>
    <property type="evidence" value="ECO:0007669"/>
    <property type="project" value="UniProtKB-UniRule"/>
</dbReference>
<dbReference type="GO" id="GO:0006189">
    <property type="term" value="P:'de novo' IMP biosynthetic process"/>
    <property type="evidence" value="ECO:0007669"/>
    <property type="project" value="UniProtKB-UniRule"/>
</dbReference>
<dbReference type="CDD" id="cd01421">
    <property type="entry name" value="IMPCH"/>
    <property type="match status" value="1"/>
</dbReference>
<dbReference type="FunFam" id="3.40.140.20:FF:000001">
    <property type="entry name" value="Bifunctional purine biosynthesis protein PurH"/>
    <property type="match status" value="1"/>
</dbReference>
<dbReference type="FunFam" id="3.40.140.20:FF:000002">
    <property type="entry name" value="Bifunctional purine biosynthesis protein PurH"/>
    <property type="match status" value="1"/>
</dbReference>
<dbReference type="FunFam" id="3.40.50.1380:FF:000001">
    <property type="entry name" value="Bifunctional purine biosynthesis protein PurH"/>
    <property type="match status" value="1"/>
</dbReference>
<dbReference type="Gene3D" id="3.40.140.20">
    <property type="match status" value="2"/>
</dbReference>
<dbReference type="Gene3D" id="3.40.50.1380">
    <property type="entry name" value="Methylglyoxal synthase-like domain"/>
    <property type="match status" value="1"/>
</dbReference>
<dbReference type="HAMAP" id="MF_00139">
    <property type="entry name" value="PurH"/>
    <property type="match status" value="1"/>
</dbReference>
<dbReference type="InterPro" id="IPR024051">
    <property type="entry name" value="AICAR_Tfase_dup_dom_sf"/>
</dbReference>
<dbReference type="InterPro" id="IPR016193">
    <property type="entry name" value="Cytidine_deaminase-like"/>
</dbReference>
<dbReference type="InterPro" id="IPR011607">
    <property type="entry name" value="MGS-like_dom"/>
</dbReference>
<dbReference type="InterPro" id="IPR036914">
    <property type="entry name" value="MGS-like_dom_sf"/>
</dbReference>
<dbReference type="InterPro" id="IPR002695">
    <property type="entry name" value="PurH-like"/>
</dbReference>
<dbReference type="NCBIfam" id="NF002049">
    <property type="entry name" value="PRK00881.1"/>
    <property type="match status" value="1"/>
</dbReference>
<dbReference type="NCBIfam" id="TIGR00355">
    <property type="entry name" value="purH"/>
    <property type="match status" value="1"/>
</dbReference>
<dbReference type="PANTHER" id="PTHR11692:SF0">
    <property type="entry name" value="BIFUNCTIONAL PURINE BIOSYNTHESIS PROTEIN ATIC"/>
    <property type="match status" value="1"/>
</dbReference>
<dbReference type="PANTHER" id="PTHR11692">
    <property type="entry name" value="BIFUNCTIONAL PURINE BIOSYNTHESIS PROTEIN PURH"/>
    <property type="match status" value="1"/>
</dbReference>
<dbReference type="Pfam" id="PF01808">
    <property type="entry name" value="AICARFT_IMPCHas"/>
    <property type="match status" value="1"/>
</dbReference>
<dbReference type="Pfam" id="PF02142">
    <property type="entry name" value="MGS"/>
    <property type="match status" value="1"/>
</dbReference>
<dbReference type="PIRSF" id="PIRSF000414">
    <property type="entry name" value="AICARFT_IMPCHas"/>
    <property type="match status" value="1"/>
</dbReference>
<dbReference type="SMART" id="SM00798">
    <property type="entry name" value="AICARFT_IMPCHas"/>
    <property type="match status" value="1"/>
</dbReference>
<dbReference type="SMART" id="SM00851">
    <property type="entry name" value="MGS"/>
    <property type="match status" value="1"/>
</dbReference>
<dbReference type="SUPFAM" id="SSF53927">
    <property type="entry name" value="Cytidine deaminase-like"/>
    <property type="match status" value="1"/>
</dbReference>
<dbReference type="SUPFAM" id="SSF52335">
    <property type="entry name" value="Methylglyoxal synthase-like"/>
    <property type="match status" value="1"/>
</dbReference>
<dbReference type="PROSITE" id="PS51855">
    <property type="entry name" value="MGS"/>
    <property type="match status" value="1"/>
</dbReference>
<sequence length="513" mass="58028">MTKKAIISVYNKDGILEFAKELKNLGYEIISTGGTMKYLKENRIDVINISDVTNFPEILDGRVKTLHPNIHAGILAIKDNEEHVKTLNDLNISTIDMVVVNLYPFKETIFRENVAFEDVIENIDIGGPTMLRAAAKNFKYITVIIDPADYGLVLKEIKENGDVSFETRFYLATKVFEYTAYYDSMIFNYFKYIRGDKSFPDYLTVPLETVQKLRYGENPHQQASFYKITLPFIEKSNIANAEQLHGKDLSYNNILDSDSAIELLKEFDEPTCVAIKHNNPCGVASGDNIFEAYKKVYNSDPVSIFGGIVAFNRKVDRQTAEELKKIFLEIVIAPDFDEDALSLLSTKKDLRILKLLTLDKTDVYYDVKSVNGGMLVQEKDRKLLNEDYQVVTERRPTEKEIEDLIFAWKVVKHVKSNAIVIAKDKMTLGIGMGQTNRIWAVEHAISRSRFDLNGAVLASDAFFPFSDSVEAAGKAGITAIIQPGGSIRDKESIDAANKYNIAMIFTGIRHFRH</sequence>
<gene>
    <name evidence="1" type="primary">purH</name>
    <name type="ordered locus">Csac_1992</name>
</gene>